<evidence type="ECO:0000255" key="1">
    <source>
        <dbReference type="PROSITE-ProRule" id="PRU00042"/>
    </source>
</evidence>
<evidence type="ECO:0000269" key="2">
    <source>
    </source>
</evidence>
<evidence type="ECO:0000305" key="3"/>
<gene>
    <name type="ORF">SPAC11D3.17</name>
</gene>
<reference key="1">
    <citation type="journal article" date="2002" name="Nature">
        <title>The genome sequence of Schizosaccharomyces pombe.</title>
        <authorList>
            <person name="Wood V."/>
            <person name="Gwilliam R."/>
            <person name="Rajandream M.A."/>
            <person name="Lyne M.H."/>
            <person name="Lyne R."/>
            <person name="Stewart A."/>
            <person name="Sgouros J.G."/>
            <person name="Peat N."/>
            <person name="Hayles J."/>
            <person name="Baker S.G."/>
            <person name="Basham D."/>
            <person name="Bowman S."/>
            <person name="Brooks K."/>
            <person name="Brown D."/>
            <person name="Brown S."/>
            <person name="Chillingworth T."/>
            <person name="Churcher C.M."/>
            <person name="Collins M."/>
            <person name="Connor R."/>
            <person name="Cronin A."/>
            <person name="Davis P."/>
            <person name="Feltwell T."/>
            <person name="Fraser A."/>
            <person name="Gentles S."/>
            <person name="Goble A."/>
            <person name="Hamlin N."/>
            <person name="Harris D.E."/>
            <person name="Hidalgo J."/>
            <person name="Hodgson G."/>
            <person name="Holroyd S."/>
            <person name="Hornsby T."/>
            <person name="Howarth S."/>
            <person name="Huckle E.J."/>
            <person name="Hunt S."/>
            <person name="Jagels K."/>
            <person name="James K.D."/>
            <person name="Jones L."/>
            <person name="Jones M."/>
            <person name="Leather S."/>
            <person name="McDonald S."/>
            <person name="McLean J."/>
            <person name="Mooney P."/>
            <person name="Moule S."/>
            <person name="Mungall K.L."/>
            <person name="Murphy L.D."/>
            <person name="Niblett D."/>
            <person name="Odell C."/>
            <person name="Oliver K."/>
            <person name="O'Neil S."/>
            <person name="Pearson D."/>
            <person name="Quail M.A."/>
            <person name="Rabbinowitsch E."/>
            <person name="Rutherford K.M."/>
            <person name="Rutter S."/>
            <person name="Saunders D."/>
            <person name="Seeger K."/>
            <person name="Sharp S."/>
            <person name="Skelton J."/>
            <person name="Simmonds M.N."/>
            <person name="Squares R."/>
            <person name="Squares S."/>
            <person name="Stevens K."/>
            <person name="Taylor K."/>
            <person name="Taylor R.G."/>
            <person name="Tivey A."/>
            <person name="Walsh S.V."/>
            <person name="Warren T."/>
            <person name="Whitehead S."/>
            <person name="Woodward J.R."/>
            <person name="Volckaert G."/>
            <person name="Aert R."/>
            <person name="Robben J."/>
            <person name="Grymonprez B."/>
            <person name="Weltjens I."/>
            <person name="Vanstreels E."/>
            <person name="Rieger M."/>
            <person name="Schaefer M."/>
            <person name="Mueller-Auer S."/>
            <person name="Gabel C."/>
            <person name="Fuchs M."/>
            <person name="Duesterhoeft A."/>
            <person name="Fritzc C."/>
            <person name="Holzer E."/>
            <person name="Moestl D."/>
            <person name="Hilbert H."/>
            <person name="Borzym K."/>
            <person name="Langer I."/>
            <person name="Beck A."/>
            <person name="Lehrach H."/>
            <person name="Reinhardt R."/>
            <person name="Pohl T.M."/>
            <person name="Eger P."/>
            <person name="Zimmermann W."/>
            <person name="Wedler H."/>
            <person name="Wambutt R."/>
            <person name="Purnelle B."/>
            <person name="Goffeau A."/>
            <person name="Cadieu E."/>
            <person name="Dreano S."/>
            <person name="Gloux S."/>
            <person name="Lelaure V."/>
            <person name="Mottier S."/>
            <person name="Galibert F."/>
            <person name="Aves S.J."/>
            <person name="Xiang Z."/>
            <person name="Hunt C."/>
            <person name="Moore K."/>
            <person name="Hurst S.M."/>
            <person name="Lucas M."/>
            <person name="Rochet M."/>
            <person name="Gaillardin C."/>
            <person name="Tallada V.A."/>
            <person name="Garzon A."/>
            <person name="Thode G."/>
            <person name="Daga R.R."/>
            <person name="Cruzado L."/>
            <person name="Jimenez J."/>
            <person name="Sanchez M."/>
            <person name="del Rey F."/>
            <person name="Benito J."/>
            <person name="Dominguez A."/>
            <person name="Revuelta J.L."/>
            <person name="Moreno S."/>
            <person name="Armstrong J."/>
            <person name="Forsburg S.L."/>
            <person name="Cerutti L."/>
            <person name="Lowe T."/>
            <person name="McCombie W.R."/>
            <person name="Paulsen I."/>
            <person name="Potashkin J."/>
            <person name="Shpakovski G.V."/>
            <person name="Ussery D."/>
            <person name="Barrell B.G."/>
            <person name="Nurse P."/>
        </authorList>
    </citation>
    <scope>NUCLEOTIDE SEQUENCE [LARGE SCALE GENOMIC DNA]</scope>
    <source>
        <strain>972 / ATCC 24843</strain>
    </source>
</reference>
<reference key="2">
    <citation type="journal article" date="2008" name="J. Proteome Res.">
        <title>Phosphoproteome analysis of fission yeast.</title>
        <authorList>
            <person name="Wilson-Grady J.T."/>
            <person name="Villen J."/>
            <person name="Gygi S.P."/>
        </authorList>
    </citation>
    <scope>PHOSPHORYLATION [LARGE SCALE ANALYSIS] AT THR-553</scope>
    <scope>IDENTIFICATION BY MASS SPECTROMETRY</scope>
</reference>
<protein>
    <recommendedName>
        <fullName>Zinc finger protein C11D3.17</fullName>
    </recommendedName>
</protein>
<sequence>MVDHVSENSTNVLSAKRKLTEPSLIDSKRVFPCDQCAKRFTRHENLTRHKACHSKAEPIPCPYCEIKCKRKDLLKRHIQRFHNDKSVIEEGSKDVLDVKAAASQQEDNMKIVLPSFDAIDVPKAYHPSLRPYFTILPLIPSDFLEHYIEGYFEWFHPVFPFIHQASFNSENVAASFLRSLVVIACLCTGIESDFSMALLFWDSGFHVLQLYLQGDPERVKKAWVFQSRLLFCTASLFEKTACFSGIGHVLLKDLVHESRTFGWTKLNWSVEGDTDISNLIDLECIRRSVFCLYILEWFLALIFNKPPSLSVLELQMPLPISSALWSSKELLSKDYWRPNPLNPRDALSILVNGPLLLEETNISGFVLLFAIFEFIRDEAKLSMIGLPRQPNRSYEIMLQHLKVSMELSNPCAKTSSIFLCLWHLVLTYYYLPDPLFLRSITLTDLESATSYFKDDSWMDDDYISPCMTTYNLTMGWENVIWGLRYAETELTKFKFDLPVPHLTLFRIFLQGLYALRDFDQISTSSLQTFTMLWKKLSTSLNMKEDAQNTAPSTCVKEFSAFVASALDVEGGWGIGPLLTKAFRPT</sequence>
<keyword id="KW-0238">DNA-binding</keyword>
<keyword id="KW-0479">Metal-binding</keyword>
<keyword id="KW-0539">Nucleus</keyword>
<keyword id="KW-0597">Phosphoprotein</keyword>
<keyword id="KW-1185">Reference proteome</keyword>
<keyword id="KW-0677">Repeat</keyword>
<keyword id="KW-0862">Zinc</keyword>
<keyword id="KW-0863">Zinc-finger</keyword>
<comment type="subcellular location">
    <subcellularLocation>
        <location evidence="3">Nucleus</location>
    </subcellularLocation>
</comment>
<proteinExistence type="evidence at protein level"/>
<feature type="chain" id="PRO_0000046866" description="Zinc finger protein C11D3.17">
    <location>
        <begin position="1"/>
        <end position="585"/>
    </location>
</feature>
<feature type="zinc finger region" description="C2H2-type 1" evidence="1">
    <location>
        <begin position="31"/>
        <end position="53"/>
    </location>
</feature>
<feature type="zinc finger region" description="C2H2-type 2" evidence="1">
    <location>
        <begin position="59"/>
        <end position="82"/>
    </location>
</feature>
<feature type="modified residue" description="Phosphothreonine" evidence="2">
    <location>
        <position position="553"/>
    </location>
</feature>
<accession>Q10096</accession>
<dbReference type="EMBL" id="CU329670">
    <property type="protein sequence ID" value="CAA92318.1"/>
    <property type="molecule type" value="Genomic_DNA"/>
</dbReference>
<dbReference type="PIR" id="T37526">
    <property type="entry name" value="T37526"/>
</dbReference>
<dbReference type="RefSeq" id="NP_592812.1">
    <property type="nucleotide sequence ID" value="NM_001018212.2"/>
</dbReference>
<dbReference type="SMR" id="Q10096"/>
<dbReference type="BioGRID" id="279444">
    <property type="interactions" value="1"/>
</dbReference>
<dbReference type="FunCoup" id="Q10096">
    <property type="interactions" value="7"/>
</dbReference>
<dbReference type="STRING" id="284812.Q10096"/>
<dbReference type="iPTMnet" id="Q10096"/>
<dbReference type="PaxDb" id="4896-SPAC11D3.17.1"/>
<dbReference type="EnsemblFungi" id="SPAC11D3.17.1">
    <property type="protein sequence ID" value="SPAC11D3.17.1:pep"/>
    <property type="gene ID" value="SPAC11D3.17"/>
</dbReference>
<dbReference type="PomBase" id="SPAC11D3.17"/>
<dbReference type="VEuPathDB" id="FungiDB:SPAC11D3.17"/>
<dbReference type="eggNOG" id="KOG1721">
    <property type="taxonomic scope" value="Eukaryota"/>
</dbReference>
<dbReference type="HOGENOM" id="CLU_466267_0_0_1"/>
<dbReference type="InParanoid" id="Q10096"/>
<dbReference type="OMA" id="CAIYELI"/>
<dbReference type="PRO" id="PR:Q10096"/>
<dbReference type="Proteomes" id="UP000002485">
    <property type="component" value="Chromosome I"/>
</dbReference>
<dbReference type="GO" id="GO:0000785">
    <property type="term" value="C:chromatin"/>
    <property type="evidence" value="ECO:0000318"/>
    <property type="project" value="GO_Central"/>
</dbReference>
<dbReference type="GO" id="GO:0005634">
    <property type="term" value="C:nucleus"/>
    <property type="evidence" value="ECO:0007005"/>
    <property type="project" value="PomBase"/>
</dbReference>
<dbReference type="GO" id="GO:0000981">
    <property type="term" value="F:DNA-binding transcription factor activity, RNA polymerase II-specific"/>
    <property type="evidence" value="ECO:0000318"/>
    <property type="project" value="GO_Central"/>
</dbReference>
<dbReference type="GO" id="GO:0000978">
    <property type="term" value="F:RNA polymerase II cis-regulatory region sequence-specific DNA binding"/>
    <property type="evidence" value="ECO:0000318"/>
    <property type="project" value="GO_Central"/>
</dbReference>
<dbReference type="GO" id="GO:0008270">
    <property type="term" value="F:zinc ion binding"/>
    <property type="evidence" value="ECO:0007669"/>
    <property type="project" value="UniProtKB-KW"/>
</dbReference>
<dbReference type="GO" id="GO:0006351">
    <property type="term" value="P:DNA-templated transcription"/>
    <property type="evidence" value="ECO:0007669"/>
    <property type="project" value="InterPro"/>
</dbReference>
<dbReference type="GO" id="GO:0006357">
    <property type="term" value="P:regulation of transcription by RNA polymerase II"/>
    <property type="evidence" value="ECO:0000318"/>
    <property type="project" value="GO_Central"/>
</dbReference>
<dbReference type="CDD" id="cd12148">
    <property type="entry name" value="fungal_TF_MHR"/>
    <property type="match status" value="1"/>
</dbReference>
<dbReference type="Gene3D" id="3.30.160.60">
    <property type="entry name" value="Classic Zinc Finger"/>
    <property type="match status" value="1"/>
</dbReference>
<dbReference type="InterPro" id="IPR007219">
    <property type="entry name" value="Transcription_factor_dom_fun"/>
</dbReference>
<dbReference type="InterPro" id="IPR051059">
    <property type="entry name" value="VerF-like"/>
</dbReference>
<dbReference type="InterPro" id="IPR036236">
    <property type="entry name" value="Znf_C2H2_sf"/>
</dbReference>
<dbReference type="InterPro" id="IPR013087">
    <property type="entry name" value="Znf_C2H2_type"/>
</dbReference>
<dbReference type="PANTHER" id="PTHR40626">
    <property type="entry name" value="MIP31509P"/>
    <property type="match status" value="1"/>
</dbReference>
<dbReference type="PANTHER" id="PTHR40626:SF11">
    <property type="entry name" value="ZINC FINGER PROTEIN YPR022C"/>
    <property type="match status" value="1"/>
</dbReference>
<dbReference type="Pfam" id="PF04082">
    <property type="entry name" value="Fungal_trans"/>
    <property type="match status" value="1"/>
</dbReference>
<dbReference type="Pfam" id="PF00096">
    <property type="entry name" value="zf-C2H2"/>
    <property type="match status" value="2"/>
</dbReference>
<dbReference type="SMART" id="SM00355">
    <property type="entry name" value="ZnF_C2H2"/>
    <property type="match status" value="2"/>
</dbReference>
<dbReference type="SUPFAM" id="SSF57667">
    <property type="entry name" value="beta-beta-alpha zinc fingers"/>
    <property type="match status" value="1"/>
</dbReference>
<dbReference type="PROSITE" id="PS00028">
    <property type="entry name" value="ZINC_FINGER_C2H2_1"/>
    <property type="match status" value="2"/>
</dbReference>
<dbReference type="PROSITE" id="PS50157">
    <property type="entry name" value="ZINC_FINGER_C2H2_2"/>
    <property type="match status" value="1"/>
</dbReference>
<organism>
    <name type="scientific">Schizosaccharomyces pombe (strain 972 / ATCC 24843)</name>
    <name type="common">Fission yeast</name>
    <dbReference type="NCBI Taxonomy" id="284812"/>
    <lineage>
        <taxon>Eukaryota</taxon>
        <taxon>Fungi</taxon>
        <taxon>Dikarya</taxon>
        <taxon>Ascomycota</taxon>
        <taxon>Taphrinomycotina</taxon>
        <taxon>Schizosaccharomycetes</taxon>
        <taxon>Schizosaccharomycetales</taxon>
        <taxon>Schizosaccharomycetaceae</taxon>
        <taxon>Schizosaccharomyces</taxon>
    </lineage>
</organism>
<name>YAOH_SCHPO</name>